<evidence type="ECO:0000250" key="1"/>
<evidence type="ECO:0000255" key="2"/>
<evidence type="ECO:0000305" key="3"/>
<sequence length="80" mass="8810">MAASKTTIFIVFVLCLSCTLLVNISGIQATSSTLKESLTAEIKPTKVDRCKTDRDCPQSHRCQKDFYYGCVVGECICRAV</sequence>
<reference key="1">
    <citation type="journal article" date="1999" name="Nature">
        <title>Sequence and analysis of chromosome 2 of the plant Arabidopsis thaliana.</title>
        <authorList>
            <person name="Lin X."/>
            <person name="Kaul S."/>
            <person name="Rounsley S.D."/>
            <person name="Shea T.P."/>
            <person name="Benito M.-I."/>
            <person name="Town C.D."/>
            <person name="Fujii C.Y."/>
            <person name="Mason T.M."/>
            <person name="Bowman C.L."/>
            <person name="Barnstead M.E."/>
            <person name="Feldblyum T.V."/>
            <person name="Buell C.R."/>
            <person name="Ketchum K.A."/>
            <person name="Lee J.J."/>
            <person name="Ronning C.M."/>
            <person name="Koo H.L."/>
            <person name="Moffat K.S."/>
            <person name="Cronin L.A."/>
            <person name="Shen M."/>
            <person name="Pai G."/>
            <person name="Van Aken S."/>
            <person name="Umayam L."/>
            <person name="Tallon L.J."/>
            <person name="Gill J.E."/>
            <person name="Adams M.D."/>
            <person name="Carrera A.J."/>
            <person name="Creasy T.H."/>
            <person name="Goodman H.M."/>
            <person name="Somerville C.R."/>
            <person name="Copenhaver G.P."/>
            <person name="Preuss D."/>
            <person name="Nierman W.C."/>
            <person name="White O."/>
            <person name="Eisen J.A."/>
            <person name="Salzberg S.L."/>
            <person name="Fraser C.M."/>
            <person name="Venter J.C."/>
        </authorList>
    </citation>
    <scope>NUCLEOTIDE SEQUENCE [LARGE SCALE GENOMIC DNA]</scope>
    <source>
        <strain>cv. Columbia</strain>
    </source>
</reference>
<reference key="2">
    <citation type="journal article" date="2017" name="Plant J.">
        <title>Araport11: a complete reannotation of the Arabidopsis thaliana reference genome.</title>
        <authorList>
            <person name="Cheng C.Y."/>
            <person name="Krishnakumar V."/>
            <person name="Chan A.P."/>
            <person name="Thibaud-Nissen F."/>
            <person name="Schobel S."/>
            <person name="Town C.D."/>
        </authorList>
    </citation>
    <scope>GENOME REANNOTATION</scope>
    <source>
        <strain>cv. Columbia</strain>
    </source>
</reference>
<reference key="3">
    <citation type="journal article" date="2005" name="Plant Physiol.">
        <title>Genome organization of more than 300 defensin-like genes in Arabidopsis.</title>
        <authorList>
            <person name="Silverstein K.A.T."/>
            <person name="Graham M.A."/>
            <person name="Paape T.D."/>
            <person name="VandenBosch K.A."/>
        </authorList>
    </citation>
    <scope>GENE FAMILY</scope>
</reference>
<comment type="subcellular location">
    <subcellularLocation>
        <location evidence="1">Secreted</location>
    </subcellularLocation>
</comment>
<comment type="similarity">
    <text evidence="3">Belongs to the DEFL family.</text>
</comment>
<comment type="caution">
    <text evidence="3">Lacks 1 of the 4 disulfide bonds, which are conserved features of the family.</text>
</comment>
<dbReference type="EMBL" id="AC006841">
    <property type="status" value="NOT_ANNOTATED_CDS"/>
    <property type="molecule type" value="Genomic_DNA"/>
</dbReference>
<dbReference type="EMBL" id="CP002685">
    <property type="protein sequence ID" value="AEC07180.1"/>
    <property type="molecule type" value="Genomic_DNA"/>
</dbReference>
<dbReference type="RefSeq" id="NP_001031388.1">
    <property type="nucleotide sequence ID" value="NM_001036311.2"/>
</dbReference>
<dbReference type="SMR" id="Q2V472"/>
<dbReference type="PaxDb" id="3702-AT2G21465.1"/>
<dbReference type="ProteomicsDB" id="224022"/>
<dbReference type="EnsemblPlants" id="AT2G21465.1">
    <property type="protein sequence ID" value="AT2G21465.1"/>
    <property type="gene ID" value="AT2G21465"/>
</dbReference>
<dbReference type="GeneID" id="3768355"/>
<dbReference type="Gramene" id="AT2G21465.1">
    <property type="protein sequence ID" value="AT2G21465.1"/>
    <property type="gene ID" value="AT2G21465"/>
</dbReference>
<dbReference type="KEGG" id="ath:AT2G21465"/>
<dbReference type="Araport" id="AT2G21465"/>
<dbReference type="TAIR" id="AT2G21465"/>
<dbReference type="eggNOG" id="KOG1075">
    <property type="taxonomic scope" value="Eukaryota"/>
</dbReference>
<dbReference type="HOGENOM" id="CLU_179561_0_0_1"/>
<dbReference type="InParanoid" id="Q2V472"/>
<dbReference type="OMA" id="HCICERL"/>
<dbReference type="OrthoDB" id="1109947at2759"/>
<dbReference type="PhylomeDB" id="Q2V472"/>
<dbReference type="PRO" id="PR:Q2V472"/>
<dbReference type="Proteomes" id="UP000006548">
    <property type="component" value="Chromosome 2"/>
</dbReference>
<dbReference type="ExpressionAtlas" id="Q2V472">
    <property type="expression patterns" value="baseline and differential"/>
</dbReference>
<dbReference type="GO" id="GO:0005576">
    <property type="term" value="C:extracellular region"/>
    <property type="evidence" value="ECO:0007669"/>
    <property type="project" value="UniProtKB-SubCell"/>
</dbReference>
<dbReference type="GO" id="GO:0050832">
    <property type="term" value="P:defense response to fungus"/>
    <property type="evidence" value="ECO:0007669"/>
    <property type="project" value="UniProtKB-KW"/>
</dbReference>
<dbReference type="GO" id="GO:0031640">
    <property type="term" value="P:killing of cells of another organism"/>
    <property type="evidence" value="ECO:0007669"/>
    <property type="project" value="UniProtKB-KW"/>
</dbReference>
<protein>
    <recommendedName>
        <fullName>Defensin-like protein 291</fullName>
    </recommendedName>
</protein>
<organism>
    <name type="scientific">Arabidopsis thaliana</name>
    <name type="common">Mouse-ear cress</name>
    <dbReference type="NCBI Taxonomy" id="3702"/>
    <lineage>
        <taxon>Eukaryota</taxon>
        <taxon>Viridiplantae</taxon>
        <taxon>Streptophyta</taxon>
        <taxon>Embryophyta</taxon>
        <taxon>Tracheophyta</taxon>
        <taxon>Spermatophyta</taxon>
        <taxon>Magnoliopsida</taxon>
        <taxon>eudicotyledons</taxon>
        <taxon>Gunneridae</taxon>
        <taxon>Pentapetalae</taxon>
        <taxon>rosids</taxon>
        <taxon>malvids</taxon>
        <taxon>Brassicales</taxon>
        <taxon>Brassicaceae</taxon>
        <taxon>Camelineae</taxon>
        <taxon>Arabidopsis</taxon>
    </lineage>
</organism>
<name>DF291_ARATH</name>
<gene>
    <name type="ordered locus">At2g21465</name>
    <name type="ORF">F3K23</name>
</gene>
<feature type="signal peptide" evidence="2">
    <location>
        <begin position="1"/>
        <end position="29"/>
    </location>
</feature>
<feature type="chain" id="PRO_0000379751" description="Defensin-like protein 291">
    <location>
        <begin position="30"/>
        <end position="80"/>
    </location>
</feature>
<feature type="disulfide bond" evidence="1">
    <location>
        <begin position="50"/>
        <end position="70"/>
    </location>
</feature>
<feature type="disulfide bond" evidence="1">
    <location>
        <begin position="56"/>
        <end position="75"/>
    </location>
</feature>
<feature type="disulfide bond" evidence="1">
    <location>
        <begin position="62"/>
        <end position="77"/>
    </location>
</feature>
<proteinExistence type="evidence at transcript level"/>
<accession>Q2V472</accession>
<keyword id="KW-0929">Antimicrobial</keyword>
<keyword id="KW-1015">Disulfide bond</keyword>
<keyword id="KW-0295">Fungicide</keyword>
<keyword id="KW-0611">Plant defense</keyword>
<keyword id="KW-1185">Reference proteome</keyword>
<keyword id="KW-0964">Secreted</keyword>
<keyword id="KW-0732">Signal</keyword>